<organism>
    <name type="scientific">Geobacillus thermodenitrificans (strain NG80-2)</name>
    <dbReference type="NCBI Taxonomy" id="420246"/>
    <lineage>
        <taxon>Bacteria</taxon>
        <taxon>Bacillati</taxon>
        <taxon>Bacillota</taxon>
        <taxon>Bacilli</taxon>
        <taxon>Bacillales</taxon>
        <taxon>Anoxybacillaceae</taxon>
        <taxon>Geobacillus</taxon>
    </lineage>
</organism>
<comment type="function">
    <text evidence="1">Regulates arginine biosynthesis genes.</text>
</comment>
<comment type="pathway">
    <text>Amino-acid biosynthesis; L-arginine biosynthesis [regulation].</text>
</comment>
<comment type="subcellular location">
    <subcellularLocation>
        <location evidence="1">Cytoplasm</location>
    </subcellularLocation>
</comment>
<comment type="similarity">
    <text evidence="1">Belongs to the ArgR family.</text>
</comment>
<proteinExistence type="inferred from homology"/>
<dbReference type="EMBL" id="CP000557">
    <property type="protein sequence ID" value="ABO67669.1"/>
    <property type="molecule type" value="Genomic_DNA"/>
</dbReference>
<dbReference type="RefSeq" id="WP_008879800.1">
    <property type="nucleotide sequence ID" value="NC_009328.1"/>
</dbReference>
<dbReference type="SMR" id="A4IQR5"/>
<dbReference type="GeneID" id="87623583"/>
<dbReference type="KEGG" id="gtn:GTNG_2320"/>
<dbReference type="eggNOG" id="COG1438">
    <property type="taxonomic scope" value="Bacteria"/>
</dbReference>
<dbReference type="HOGENOM" id="CLU_097103_3_0_9"/>
<dbReference type="UniPathway" id="UPA00068"/>
<dbReference type="Proteomes" id="UP000001578">
    <property type="component" value="Chromosome"/>
</dbReference>
<dbReference type="GO" id="GO:0005737">
    <property type="term" value="C:cytoplasm"/>
    <property type="evidence" value="ECO:0007669"/>
    <property type="project" value="UniProtKB-SubCell"/>
</dbReference>
<dbReference type="GO" id="GO:0034618">
    <property type="term" value="F:arginine binding"/>
    <property type="evidence" value="ECO:0007669"/>
    <property type="project" value="InterPro"/>
</dbReference>
<dbReference type="GO" id="GO:0003677">
    <property type="term" value="F:DNA binding"/>
    <property type="evidence" value="ECO:0007669"/>
    <property type="project" value="UniProtKB-KW"/>
</dbReference>
<dbReference type="GO" id="GO:0003700">
    <property type="term" value="F:DNA-binding transcription factor activity"/>
    <property type="evidence" value="ECO:0007669"/>
    <property type="project" value="UniProtKB-UniRule"/>
</dbReference>
<dbReference type="GO" id="GO:0006526">
    <property type="term" value="P:L-arginine biosynthetic process"/>
    <property type="evidence" value="ECO:0007669"/>
    <property type="project" value="UniProtKB-UniPathway"/>
</dbReference>
<dbReference type="GO" id="GO:0051259">
    <property type="term" value="P:protein complex oligomerization"/>
    <property type="evidence" value="ECO:0007669"/>
    <property type="project" value="InterPro"/>
</dbReference>
<dbReference type="GO" id="GO:1900079">
    <property type="term" value="P:regulation of arginine biosynthetic process"/>
    <property type="evidence" value="ECO:0007669"/>
    <property type="project" value="UniProtKB-UniRule"/>
</dbReference>
<dbReference type="FunFam" id="3.30.1360.40:FF:000006">
    <property type="entry name" value="Arginine repressor"/>
    <property type="match status" value="1"/>
</dbReference>
<dbReference type="Gene3D" id="3.30.1360.40">
    <property type="match status" value="1"/>
</dbReference>
<dbReference type="Gene3D" id="1.10.10.10">
    <property type="entry name" value="Winged helix-like DNA-binding domain superfamily/Winged helix DNA-binding domain"/>
    <property type="match status" value="1"/>
</dbReference>
<dbReference type="HAMAP" id="MF_00173">
    <property type="entry name" value="Arg_repressor"/>
    <property type="match status" value="1"/>
</dbReference>
<dbReference type="InterPro" id="IPR001669">
    <property type="entry name" value="Arg_repress"/>
</dbReference>
<dbReference type="InterPro" id="IPR020899">
    <property type="entry name" value="Arg_repress_C"/>
</dbReference>
<dbReference type="InterPro" id="IPR036251">
    <property type="entry name" value="Arg_repress_C_sf"/>
</dbReference>
<dbReference type="InterPro" id="IPR020900">
    <property type="entry name" value="Arg_repress_DNA-bd"/>
</dbReference>
<dbReference type="InterPro" id="IPR036388">
    <property type="entry name" value="WH-like_DNA-bd_sf"/>
</dbReference>
<dbReference type="InterPro" id="IPR036390">
    <property type="entry name" value="WH_DNA-bd_sf"/>
</dbReference>
<dbReference type="NCBIfam" id="TIGR01529">
    <property type="entry name" value="argR_whole"/>
    <property type="match status" value="1"/>
</dbReference>
<dbReference type="NCBIfam" id="NF003281">
    <property type="entry name" value="PRK04280.1"/>
    <property type="match status" value="1"/>
</dbReference>
<dbReference type="PANTHER" id="PTHR34471">
    <property type="entry name" value="ARGININE REPRESSOR"/>
    <property type="match status" value="1"/>
</dbReference>
<dbReference type="PANTHER" id="PTHR34471:SF1">
    <property type="entry name" value="ARGININE REPRESSOR"/>
    <property type="match status" value="1"/>
</dbReference>
<dbReference type="Pfam" id="PF01316">
    <property type="entry name" value="Arg_repressor"/>
    <property type="match status" value="1"/>
</dbReference>
<dbReference type="Pfam" id="PF02863">
    <property type="entry name" value="Arg_repressor_C"/>
    <property type="match status" value="1"/>
</dbReference>
<dbReference type="PRINTS" id="PR01467">
    <property type="entry name" value="ARGREPRESSOR"/>
</dbReference>
<dbReference type="SUPFAM" id="SSF55252">
    <property type="entry name" value="C-terminal domain of arginine repressor"/>
    <property type="match status" value="1"/>
</dbReference>
<dbReference type="SUPFAM" id="SSF46785">
    <property type="entry name" value="Winged helix' DNA-binding domain"/>
    <property type="match status" value="1"/>
</dbReference>
<evidence type="ECO:0000255" key="1">
    <source>
        <dbReference type="HAMAP-Rule" id="MF_00173"/>
    </source>
</evidence>
<feature type="chain" id="PRO_1000023567" description="Arginine repressor">
    <location>
        <begin position="1"/>
        <end position="149"/>
    </location>
</feature>
<accession>A4IQR5</accession>
<sequence length="149" mass="16719">MNKGQRHIKIREIIMNSDIETQDELVDRLKEAGFNVTQATVSRDIKEMQLVKVPMANGRYKYSLPSDQRFNPLQKLKRALVDVFIKLDGTGNLLVLRTLPGNAHAIGVLLDNLDWGEIVGTICGDDTCLIICRTPKDAKKVSNQLLSML</sequence>
<keyword id="KW-0028">Amino-acid biosynthesis</keyword>
<keyword id="KW-0055">Arginine biosynthesis</keyword>
<keyword id="KW-0963">Cytoplasm</keyword>
<keyword id="KW-0238">DNA-binding</keyword>
<keyword id="KW-0678">Repressor</keyword>
<keyword id="KW-0804">Transcription</keyword>
<keyword id="KW-0805">Transcription regulation</keyword>
<reference key="1">
    <citation type="journal article" date="2007" name="Proc. Natl. Acad. Sci. U.S.A.">
        <title>Genome and proteome of long-chain alkane degrading Geobacillus thermodenitrificans NG80-2 isolated from a deep-subsurface oil reservoir.</title>
        <authorList>
            <person name="Feng L."/>
            <person name="Wang W."/>
            <person name="Cheng J."/>
            <person name="Ren Y."/>
            <person name="Zhao G."/>
            <person name="Gao C."/>
            <person name="Tang Y."/>
            <person name="Liu X."/>
            <person name="Han W."/>
            <person name="Peng X."/>
            <person name="Liu R."/>
            <person name="Wang L."/>
        </authorList>
    </citation>
    <scope>NUCLEOTIDE SEQUENCE [LARGE SCALE GENOMIC DNA]</scope>
    <source>
        <strain>NG80-2</strain>
    </source>
</reference>
<gene>
    <name evidence="1" type="primary">argR</name>
    <name type="ordered locus">GTNG_2320</name>
</gene>
<protein>
    <recommendedName>
        <fullName evidence="1">Arginine repressor</fullName>
    </recommendedName>
</protein>
<name>ARGR_GEOTN</name>